<organism>
    <name type="scientific">Roseiflexus castenholzii (strain DSM 13941 / HLO8)</name>
    <dbReference type="NCBI Taxonomy" id="383372"/>
    <lineage>
        <taxon>Bacteria</taxon>
        <taxon>Bacillati</taxon>
        <taxon>Chloroflexota</taxon>
        <taxon>Chloroflexia</taxon>
        <taxon>Chloroflexales</taxon>
        <taxon>Roseiflexineae</taxon>
        <taxon>Roseiflexaceae</taxon>
        <taxon>Roseiflexus</taxon>
    </lineage>
</organism>
<proteinExistence type="inferred from homology"/>
<dbReference type="EC" id="2.7.7.105" evidence="1"/>
<dbReference type="EMBL" id="CP000804">
    <property type="protein sequence ID" value="ABU60013.1"/>
    <property type="molecule type" value="Genomic_DNA"/>
</dbReference>
<dbReference type="RefSeq" id="WP_012122436.1">
    <property type="nucleotide sequence ID" value="NC_009767.1"/>
</dbReference>
<dbReference type="SMR" id="A7NR17"/>
<dbReference type="STRING" id="383372.Rcas_3980"/>
<dbReference type="KEGG" id="rca:Rcas_3980"/>
<dbReference type="eggNOG" id="COG1920">
    <property type="taxonomic scope" value="Bacteria"/>
</dbReference>
<dbReference type="HOGENOM" id="CLU_076569_1_0_0"/>
<dbReference type="OrthoDB" id="9151145at2"/>
<dbReference type="UniPathway" id="UPA00071"/>
<dbReference type="Proteomes" id="UP000000263">
    <property type="component" value="Chromosome"/>
</dbReference>
<dbReference type="GO" id="GO:0005525">
    <property type="term" value="F:GTP binding"/>
    <property type="evidence" value="ECO:0007669"/>
    <property type="project" value="UniProtKB-KW"/>
</dbReference>
<dbReference type="GO" id="GO:0043814">
    <property type="term" value="F:phospholactate guanylyltransferase activity"/>
    <property type="evidence" value="ECO:0007669"/>
    <property type="project" value="InterPro"/>
</dbReference>
<dbReference type="GO" id="GO:0052645">
    <property type="term" value="P:F420-0 metabolic process"/>
    <property type="evidence" value="ECO:0007669"/>
    <property type="project" value="UniProtKB-UniRule"/>
</dbReference>
<dbReference type="Gene3D" id="3.90.550.10">
    <property type="entry name" value="Spore Coat Polysaccharide Biosynthesis Protein SpsA, Chain A"/>
    <property type="match status" value="1"/>
</dbReference>
<dbReference type="HAMAP" id="MF_02114">
    <property type="entry name" value="CofC"/>
    <property type="match status" value="1"/>
</dbReference>
<dbReference type="InterPro" id="IPR002835">
    <property type="entry name" value="CofC"/>
</dbReference>
<dbReference type="InterPro" id="IPR029044">
    <property type="entry name" value="Nucleotide-diphossugar_trans"/>
</dbReference>
<dbReference type="NCBIfam" id="TIGR03552">
    <property type="entry name" value="F420_cofC"/>
    <property type="match status" value="1"/>
</dbReference>
<dbReference type="PANTHER" id="PTHR40392">
    <property type="entry name" value="2-PHOSPHO-L-LACTATE GUANYLYLTRANSFERASE"/>
    <property type="match status" value="1"/>
</dbReference>
<dbReference type="PANTHER" id="PTHR40392:SF1">
    <property type="entry name" value="2-PHOSPHO-L-LACTATE GUANYLYLTRANSFERASE"/>
    <property type="match status" value="1"/>
</dbReference>
<dbReference type="Pfam" id="PF01983">
    <property type="entry name" value="CofC"/>
    <property type="match status" value="1"/>
</dbReference>
<dbReference type="SUPFAM" id="SSF53448">
    <property type="entry name" value="Nucleotide-diphospho-sugar transferases"/>
    <property type="match status" value="1"/>
</dbReference>
<protein>
    <recommendedName>
        <fullName evidence="1">Phosphoenolpyruvate guanylyltransferase</fullName>
        <shortName evidence="1">PEP guanylyltransferase</shortName>
        <ecNumber evidence="1">2.7.7.105</ecNumber>
    </recommendedName>
</protein>
<reference key="1">
    <citation type="submission" date="2007-08" db="EMBL/GenBank/DDBJ databases">
        <title>Complete sequence of Roseiflexus castenholzii DSM 13941.</title>
        <authorList>
            <consortium name="US DOE Joint Genome Institute"/>
            <person name="Copeland A."/>
            <person name="Lucas S."/>
            <person name="Lapidus A."/>
            <person name="Barry K."/>
            <person name="Glavina del Rio T."/>
            <person name="Dalin E."/>
            <person name="Tice H."/>
            <person name="Pitluck S."/>
            <person name="Thompson L.S."/>
            <person name="Brettin T."/>
            <person name="Bruce D."/>
            <person name="Detter J.C."/>
            <person name="Han C."/>
            <person name="Tapia R."/>
            <person name="Schmutz J."/>
            <person name="Larimer F."/>
            <person name="Land M."/>
            <person name="Hauser L."/>
            <person name="Kyrpides N."/>
            <person name="Mikhailova N."/>
            <person name="Bryant D.A."/>
            <person name="Hanada S."/>
            <person name="Tsukatani Y."/>
            <person name="Richardson P."/>
        </authorList>
    </citation>
    <scope>NUCLEOTIDE SEQUENCE [LARGE SCALE GENOMIC DNA]</scope>
    <source>
        <strain>DSM 13941 / HLO8</strain>
    </source>
</reference>
<feature type="chain" id="PRO_0000398709" description="Phosphoenolpyruvate guanylyltransferase">
    <location>
        <begin position="1"/>
        <end position="210"/>
    </location>
</feature>
<feature type="binding site" evidence="1">
    <location>
        <position position="130"/>
    </location>
    <ligand>
        <name>phosphoenolpyruvate</name>
        <dbReference type="ChEBI" id="CHEBI:58702"/>
    </ligand>
</feature>
<feature type="binding site" evidence="1">
    <location>
        <position position="146"/>
    </location>
    <ligand>
        <name>phosphoenolpyruvate</name>
        <dbReference type="ChEBI" id="CHEBI:58702"/>
    </ligand>
</feature>
<feature type="binding site" evidence="1">
    <location>
        <position position="149"/>
    </location>
    <ligand>
        <name>phosphoenolpyruvate</name>
        <dbReference type="ChEBI" id="CHEBI:58702"/>
    </ligand>
</feature>
<name>FBID_ROSCS</name>
<comment type="function">
    <text evidence="1">Guanylyltransferase that catalyzes the activation of phosphoenolpyruvate (PEP) as enolpyruvoyl-2-diphospho-5'-guanosine, via the condensation of PEP with GTP. It is involved in the biosynthesis of coenzyme F420, a hydride carrier cofactor.</text>
</comment>
<comment type="catalytic activity">
    <reaction evidence="1">
        <text>phosphoenolpyruvate + GTP + H(+) = enolpyruvoyl-2-diphospho-5'-guanosine + diphosphate</text>
        <dbReference type="Rhea" id="RHEA:30519"/>
        <dbReference type="ChEBI" id="CHEBI:15378"/>
        <dbReference type="ChEBI" id="CHEBI:33019"/>
        <dbReference type="ChEBI" id="CHEBI:37565"/>
        <dbReference type="ChEBI" id="CHEBI:58702"/>
        <dbReference type="ChEBI" id="CHEBI:143701"/>
        <dbReference type="EC" id="2.7.7.105"/>
    </reaction>
</comment>
<comment type="pathway">
    <text evidence="1">Cofactor biosynthesis; coenzyme F420 biosynthesis.</text>
</comment>
<comment type="miscellaneous">
    <text evidence="2">The exact nature of the substrate is currently not known. This entry has been annotated based on its similarity to Actinobacteria.</text>
</comment>
<comment type="similarity">
    <text evidence="1">Belongs to the CofC family.</text>
</comment>
<gene>
    <name evidence="1" type="primary">fbiD</name>
    <name type="ordered locus">Rcas_3980</name>
</gene>
<accession>A7NR17</accession>
<sequence length="210" mass="23121">MDLYAIVPVKELRHAKQRLAHALDAHERQELSLAMLGDVLAALSQSQVRRVTVISRDTAAYQIATAYGAVIAVDQTSDLNAALYQAAVDVPDDAAILIVPSDVPLLRADDVMMLAAQPGVAITPAHDGGTNLLLTPAIRGWTFLFGPDSFVRHCAEARRRGWTVHVVRLPHLERDIDEVDDLVWLAQQPGHTAAQRLAREFLMRKGARIW</sequence>
<keyword id="KW-0342">GTP-binding</keyword>
<keyword id="KW-0547">Nucleotide-binding</keyword>
<keyword id="KW-0548">Nucleotidyltransferase</keyword>
<keyword id="KW-1185">Reference proteome</keyword>
<keyword id="KW-0808">Transferase</keyword>
<evidence type="ECO:0000255" key="1">
    <source>
        <dbReference type="HAMAP-Rule" id="MF_02114"/>
    </source>
</evidence>
<evidence type="ECO:0000305" key="2"/>